<feature type="chain" id="PRO_0000180952" description="Flagellar biosynthetic protein FlhB">
    <location>
        <begin position="1"/>
        <end position="358"/>
    </location>
</feature>
<feature type="transmembrane region" description="Helical" evidence="2">
    <location>
        <begin position="31"/>
        <end position="51"/>
    </location>
</feature>
<feature type="transmembrane region" description="Helical" evidence="2">
    <location>
        <begin position="86"/>
        <end position="106"/>
    </location>
</feature>
<feature type="transmembrane region" description="Helical" evidence="2">
    <location>
        <begin position="144"/>
        <end position="164"/>
    </location>
</feature>
<feature type="transmembrane region" description="Helical" evidence="2">
    <location>
        <begin position="187"/>
        <end position="207"/>
    </location>
</feature>
<feature type="transmembrane region" description="Helical" evidence="2">
    <location>
        <begin position="323"/>
        <end position="343"/>
    </location>
</feature>
<protein>
    <recommendedName>
        <fullName>Flagellar biosynthetic protein FlhB</fullName>
    </recommendedName>
</protein>
<proteinExistence type="inferred from homology"/>
<organism>
    <name type="scientific">Helicobacter pylori (strain J99 / ATCC 700824)</name>
    <name type="common">Campylobacter pylori J99</name>
    <dbReference type="NCBI Taxonomy" id="85963"/>
    <lineage>
        <taxon>Bacteria</taxon>
        <taxon>Pseudomonadati</taxon>
        <taxon>Campylobacterota</taxon>
        <taxon>Epsilonproteobacteria</taxon>
        <taxon>Campylobacterales</taxon>
        <taxon>Helicobacteraceae</taxon>
        <taxon>Helicobacter</taxon>
    </lineage>
</organism>
<comment type="function">
    <text evidence="1">Required for formation of the rod structure in the basal body of the flagellar apparatus. Together with FliI and FliH, may constitute the export apparatus of flagellin (By similarity).</text>
</comment>
<comment type="subcellular location">
    <subcellularLocation>
        <location evidence="3">Cell inner membrane</location>
        <topology evidence="3">Multi-pass membrane protein</topology>
    </subcellularLocation>
</comment>
<comment type="similarity">
    <text evidence="3">Belongs to the type III secretion exporter family.</text>
</comment>
<sequence>MAEEEKTELPSAKKIQKAREEGNVPKSMEVVGFLGLLAGLMSIFVFFIWWVDGFSEMYRHVLKDFSLDFSKESVQELFNQLAKDTFLLLLPVLIILMVVAFLSNVLQFGWLFAPKVIEPKFSKINPINGVKNLFSLKKILDGSLITLKVFLAFFLGFFIFSLFLGELNHAALLNLQGQLLWFKSKALWLISSLLFLFFVLAFVDLIIKRRQYTNSLKMTKQEVKDEYKQQEGNPEIKAKIRQMMVKNATNKMMQEIPKSNVVVTNPTHYAVALKFDEEHPVPVVVAKGTDYLAIRIKGIAREHDIEIIENKTLARELYRDVKLNATIPEELFEAVAIVFAQVAKLEQERQKQKIIKPL</sequence>
<reference key="1">
    <citation type="journal article" date="1999" name="Nature">
        <title>Genomic sequence comparison of two unrelated isolates of the human gastric pathogen Helicobacter pylori.</title>
        <authorList>
            <person name="Alm R.A."/>
            <person name="Ling L.-S.L."/>
            <person name="Moir D.T."/>
            <person name="King B.L."/>
            <person name="Brown E.D."/>
            <person name="Doig P.C."/>
            <person name="Smith D.R."/>
            <person name="Noonan B."/>
            <person name="Guild B.C."/>
            <person name="deJonge B.L."/>
            <person name="Carmel G."/>
            <person name="Tummino P.J."/>
            <person name="Caruso A."/>
            <person name="Uria-Nickelsen M."/>
            <person name="Mills D.M."/>
            <person name="Ives C."/>
            <person name="Gibson R."/>
            <person name="Merberg D."/>
            <person name="Mills S.D."/>
            <person name="Jiang Q."/>
            <person name="Taylor D.E."/>
            <person name="Vovis G.F."/>
            <person name="Trust T.J."/>
        </authorList>
    </citation>
    <scope>NUCLEOTIDE SEQUENCE [LARGE SCALE GENOMIC DNA]</scope>
    <source>
        <strain>J99 / ATCC 700824</strain>
    </source>
</reference>
<keyword id="KW-1005">Bacterial flagellum biogenesis</keyword>
<keyword id="KW-1006">Bacterial flagellum protein export</keyword>
<keyword id="KW-0997">Cell inner membrane</keyword>
<keyword id="KW-1003">Cell membrane</keyword>
<keyword id="KW-0472">Membrane</keyword>
<keyword id="KW-0653">Protein transport</keyword>
<keyword id="KW-0812">Transmembrane</keyword>
<keyword id="KW-1133">Transmembrane helix</keyword>
<keyword id="KW-0813">Transport</keyword>
<accession>Q9ZL73</accession>
<evidence type="ECO:0000250" key="1"/>
<evidence type="ECO:0000255" key="2"/>
<evidence type="ECO:0000305" key="3"/>
<dbReference type="EMBL" id="AE001439">
    <property type="protein sequence ID" value="AAD06292.1"/>
    <property type="molecule type" value="Genomic_DNA"/>
</dbReference>
<dbReference type="PIR" id="F71897">
    <property type="entry name" value="F71897"/>
</dbReference>
<dbReference type="RefSeq" id="WP_000796831.1">
    <property type="nucleotide sequence ID" value="NC_000921.1"/>
</dbReference>
<dbReference type="SMR" id="Q9ZL73"/>
<dbReference type="MEROPS" id="N06.A01"/>
<dbReference type="KEGG" id="hpj:jhp_0707"/>
<dbReference type="PATRIC" id="fig|85963.30.peg.270"/>
<dbReference type="eggNOG" id="COG1377">
    <property type="taxonomic scope" value="Bacteria"/>
</dbReference>
<dbReference type="Proteomes" id="UP000000804">
    <property type="component" value="Chromosome"/>
</dbReference>
<dbReference type="GO" id="GO:0005886">
    <property type="term" value="C:plasma membrane"/>
    <property type="evidence" value="ECO:0007669"/>
    <property type="project" value="UniProtKB-SubCell"/>
</dbReference>
<dbReference type="GO" id="GO:0044780">
    <property type="term" value="P:bacterial-type flagellum assembly"/>
    <property type="evidence" value="ECO:0007669"/>
    <property type="project" value="InterPro"/>
</dbReference>
<dbReference type="GO" id="GO:0009306">
    <property type="term" value="P:protein secretion"/>
    <property type="evidence" value="ECO:0007669"/>
    <property type="project" value="InterPro"/>
</dbReference>
<dbReference type="FunFam" id="3.40.1690.10:FF:000001">
    <property type="entry name" value="Flagellar biosynthetic protein FlhB"/>
    <property type="match status" value="1"/>
</dbReference>
<dbReference type="Gene3D" id="6.10.250.2080">
    <property type="match status" value="1"/>
</dbReference>
<dbReference type="Gene3D" id="3.40.1690.10">
    <property type="entry name" value="secretion proteins EscU"/>
    <property type="match status" value="1"/>
</dbReference>
<dbReference type="InterPro" id="IPR006136">
    <property type="entry name" value="FlhB"/>
</dbReference>
<dbReference type="InterPro" id="IPR006135">
    <property type="entry name" value="T3SS_substrate_exporter"/>
</dbReference>
<dbReference type="InterPro" id="IPR029025">
    <property type="entry name" value="T3SS_substrate_exporter_C"/>
</dbReference>
<dbReference type="NCBIfam" id="TIGR00328">
    <property type="entry name" value="flhB"/>
    <property type="match status" value="1"/>
</dbReference>
<dbReference type="PANTHER" id="PTHR30531">
    <property type="entry name" value="FLAGELLAR BIOSYNTHETIC PROTEIN FLHB"/>
    <property type="match status" value="1"/>
</dbReference>
<dbReference type="PANTHER" id="PTHR30531:SF12">
    <property type="entry name" value="FLAGELLAR BIOSYNTHETIC PROTEIN FLHB"/>
    <property type="match status" value="1"/>
</dbReference>
<dbReference type="Pfam" id="PF01312">
    <property type="entry name" value="Bac_export_2"/>
    <property type="match status" value="1"/>
</dbReference>
<dbReference type="PRINTS" id="PR00950">
    <property type="entry name" value="TYPE3IMSPROT"/>
</dbReference>
<dbReference type="SUPFAM" id="SSF160544">
    <property type="entry name" value="EscU C-terminal domain-like"/>
    <property type="match status" value="1"/>
</dbReference>
<name>FLHB_HELPJ</name>
<gene>
    <name type="primary">flhB</name>
    <name type="ordered locus">jhp_0707</name>
</gene>